<name>TPIS_YERPY</name>
<dbReference type="EC" id="5.3.1.1" evidence="1"/>
<dbReference type="EMBL" id="CP000950">
    <property type="protein sequence ID" value="ACA70377.1"/>
    <property type="molecule type" value="Genomic_DNA"/>
</dbReference>
<dbReference type="RefSeq" id="WP_002208959.1">
    <property type="nucleotide sequence ID" value="NZ_CP009792.1"/>
</dbReference>
<dbReference type="SMR" id="B1JQ90"/>
<dbReference type="GeneID" id="57974507"/>
<dbReference type="KEGG" id="ypy:YPK_4118"/>
<dbReference type="PATRIC" id="fig|502800.11.peg.468"/>
<dbReference type="UniPathway" id="UPA00109">
    <property type="reaction ID" value="UER00189"/>
</dbReference>
<dbReference type="UniPathway" id="UPA00138"/>
<dbReference type="GO" id="GO:0005829">
    <property type="term" value="C:cytosol"/>
    <property type="evidence" value="ECO:0007669"/>
    <property type="project" value="TreeGrafter"/>
</dbReference>
<dbReference type="GO" id="GO:0004807">
    <property type="term" value="F:triose-phosphate isomerase activity"/>
    <property type="evidence" value="ECO:0007669"/>
    <property type="project" value="UniProtKB-UniRule"/>
</dbReference>
<dbReference type="GO" id="GO:0006094">
    <property type="term" value="P:gluconeogenesis"/>
    <property type="evidence" value="ECO:0007669"/>
    <property type="project" value="UniProtKB-UniRule"/>
</dbReference>
<dbReference type="GO" id="GO:0046166">
    <property type="term" value="P:glyceraldehyde-3-phosphate biosynthetic process"/>
    <property type="evidence" value="ECO:0007669"/>
    <property type="project" value="TreeGrafter"/>
</dbReference>
<dbReference type="GO" id="GO:0019563">
    <property type="term" value="P:glycerol catabolic process"/>
    <property type="evidence" value="ECO:0007669"/>
    <property type="project" value="TreeGrafter"/>
</dbReference>
<dbReference type="GO" id="GO:0006096">
    <property type="term" value="P:glycolytic process"/>
    <property type="evidence" value="ECO:0007669"/>
    <property type="project" value="UniProtKB-UniRule"/>
</dbReference>
<dbReference type="CDD" id="cd00311">
    <property type="entry name" value="TIM"/>
    <property type="match status" value="1"/>
</dbReference>
<dbReference type="FunFam" id="3.20.20.70:FF:000020">
    <property type="entry name" value="Triosephosphate isomerase"/>
    <property type="match status" value="1"/>
</dbReference>
<dbReference type="Gene3D" id="3.20.20.70">
    <property type="entry name" value="Aldolase class I"/>
    <property type="match status" value="1"/>
</dbReference>
<dbReference type="HAMAP" id="MF_00147_B">
    <property type="entry name" value="TIM_B"/>
    <property type="match status" value="1"/>
</dbReference>
<dbReference type="InterPro" id="IPR013785">
    <property type="entry name" value="Aldolase_TIM"/>
</dbReference>
<dbReference type="InterPro" id="IPR035990">
    <property type="entry name" value="TIM_sf"/>
</dbReference>
<dbReference type="InterPro" id="IPR022896">
    <property type="entry name" value="TrioseP_Isoase_bac/euk"/>
</dbReference>
<dbReference type="InterPro" id="IPR000652">
    <property type="entry name" value="Triosephosphate_isomerase"/>
</dbReference>
<dbReference type="InterPro" id="IPR020861">
    <property type="entry name" value="Triosephosphate_isomerase_AS"/>
</dbReference>
<dbReference type="NCBIfam" id="TIGR00419">
    <property type="entry name" value="tim"/>
    <property type="match status" value="1"/>
</dbReference>
<dbReference type="PANTHER" id="PTHR21139">
    <property type="entry name" value="TRIOSEPHOSPHATE ISOMERASE"/>
    <property type="match status" value="1"/>
</dbReference>
<dbReference type="PANTHER" id="PTHR21139:SF42">
    <property type="entry name" value="TRIOSEPHOSPHATE ISOMERASE"/>
    <property type="match status" value="1"/>
</dbReference>
<dbReference type="Pfam" id="PF00121">
    <property type="entry name" value="TIM"/>
    <property type="match status" value="1"/>
</dbReference>
<dbReference type="SUPFAM" id="SSF51351">
    <property type="entry name" value="Triosephosphate isomerase (TIM)"/>
    <property type="match status" value="1"/>
</dbReference>
<dbReference type="PROSITE" id="PS00171">
    <property type="entry name" value="TIM_1"/>
    <property type="match status" value="1"/>
</dbReference>
<dbReference type="PROSITE" id="PS51440">
    <property type="entry name" value="TIM_2"/>
    <property type="match status" value="1"/>
</dbReference>
<organism>
    <name type="scientific">Yersinia pseudotuberculosis serotype O:3 (strain YPIII)</name>
    <dbReference type="NCBI Taxonomy" id="502800"/>
    <lineage>
        <taxon>Bacteria</taxon>
        <taxon>Pseudomonadati</taxon>
        <taxon>Pseudomonadota</taxon>
        <taxon>Gammaproteobacteria</taxon>
        <taxon>Enterobacterales</taxon>
        <taxon>Yersiniaceae</taxon>
        <taxon>Yersinia</taxon>
    </lineage>
</organism>
<accession>B1JQ90</accession>
<reference key="1">
    <citation type="submission" date="2008-02" db="EMBL/GenBank/DDBJ databases">
        <title>Complete sequence of Yersinia pseudotuberculosis YPIII.</title>
        <authorList>
            <consortium name="US DOE Joint Genome Institute"/>
            <person name="Copeland A."/>
            <person name="Lucas S."/>
            <person name="Lapidus A."/>
            <person name="Glavina del Rio T."/>
            <person name="Dalin E."/>
            <person name="Tice H."/>
            <person name="Bruce D."/>
            <person name="Goodwin L."/>
            <person name="Pitluck S."/>
            <person name="Munk A.C."/>
            <person name="Brettin T."/>
            <person name="Detter J.C."/>
            <person name="Han C."/>
            <person name="Tapia R."/>
            <person name="Schmutz J."/>
            <person name="Larimer F."/>
            <person name="Land M."/>
            <person name="Hauser L."/>
            <person name="Challacombe J.F."/>
            <person name="Green L."/>
            <person name="Lindler L.E."/>
            <person name="Nikolich M.P."/>
            <person name="Richardson P."/>
        </authorList>
    </citation>
    <scope>NUCLEOTIDE SEQUENCE [LARGE SCALE GENOMIC DNA]</scope>
    <source>
        <strain>YPIII</strain>
    </source>
</reference>
<feature type="chain" id="PRO_1000096555" description="Triosephosphate isomerase">
    <location>
        <begin position="1"/>
        <end position="255"/>
    </location>
</feature>
<feature type="active site" description="Electrophile" evidence="1">
    <location>
        <position position="95"/>
    </location>
</feature>
<feature type="active site" description="Proton acceptor" evidence="1">
    <location>
        <position position="167"/>
    </location>
</feature>
<feature type="binding site" evidence="1">
    <location>
        <begin position="9"/>
        <end position="11"/>
    </location>
    <ligand>
        <name>substrate</name>
    </ligand>
</feature>
<feature type="binding site" evidence="1">
    <location>
        <position position="173"/>
    </location>
    <ligand>
        <name>substrate</name>
    </ligand>
</feature>
<feature type="binding site" evidence="1">
    <location>
        <position position="212"/>
    </location>
    <ligand>
        <name>substrate</name>
    </ligand>
</feature>
<feature type="binding site" evidence="1">
    <location>
        <begin position="233"/>
        <end position="234"/>
    </location>
    <ligand>
        <name>substrate</name>
    </ligand>
</feature>
<protein>
    <recommendedName>
        <fullName evidence="1">Triosephosphate isomerase</fullName>
        <shortName evidence="1">TIM</shortName>
        <shortName evidence="1">TPI</shortName>
        <ecNumber evidence="1">5.3.1.1</ecNumber>
    </recommendedName>
    <alternativeName>
        <fullName evidence="1">Triose-phosphate isomerase</fullName>
    </alternativeName>
</protein>
<gene>
    <name evidence="1" type="primary">tpiA</name>
    <name type="ordered locus">YPK_4118</name>
</gene>
<keyword id="KW-0963">Cytoplasm</keyword>
<keyword id="KW-0312">Gluconeogenesis</keyword>
<keyword id="KW-0324">Glycolysis</keyword>
<keyword id="KW-0413">Isomerase</keyword>
<proteinExistence type="inferred from homology"/>
<comment type="function">
    <text evidence="1">Involved in the gluconeogenesis. Catalyzes stereospecifically the conversion of dihydroxyacetone phosphate (DHAP) to D-glyceraldehyde-3-phosphate (G3P).</text>
</comment>
<comment type="catalytic activity">
    <reaction evidence="1">
        <text>D-glyceraldehyde 3-phosphate = dihydroxyacetone phosphate</text>
        <dbReference type="Rhea" id="RHEA:18585"/>
        <dbReference type="ChEBI" id="CHEBI:57642"/>
        <dbReference type="ChEBI" id="CHEBI:59776"/>
        <dbReference type="EC" id="5.3.1.1"/>
    </reaction>
</comment>
<comment type="pathway">
    <text evidence="1">Carbohydrate biosynthesis; gluconeogenesis.</text>
</comment>
<comment type="pathway">
    <text evidence="1">Carbohydrate degradation; glycolysis; D-glyceraldehyde 3-phosphate from glycerone phosphate: step 1/1.</text>
</comment>
<comment type="subunit">
    <text evidence="1">Homodimer.</text>
</comment>
<comment type="subcellular location">
    <subcellularLocation>
        <location evidence="1">Cytoplasm</location>
    </subcellularLocation>
</comment>
<comment type="similarity">
    <text evidence="1">Belongs to the triosephosphate isomerase family.</text>
</comment>
<evidence type="ECO:0000255" key="1">
    <source>
        <dbReference type="HAMAP-Rule" id="MF_00147"/>
    </source>
</evidence>
<sequence length="255" mass="26794">MRHPLVMGNWKLNGSTHMVNELIAGLRKELSTVDGCGVAIAPPAIYLNQAKHELAGSRIALGAQNVDVNLSGAFTGETSAEMLKDIGAQYIIIGHSERRTYHQESDELIAKKFGVLKEIGLIPVLCIGESEAENEAGQTEAVCAKQLDAVLNTLGVKAFEGAVIAYEPIWAIGTGKSATPAQAQAVHKFIRDHIAKQDAAVAAQVIIQYGGSVNDKNAAELFTQPDIDGALVGGASLKADAFAVIVKAAAKAKKA</sequence>